<protein>
    <recommendedName>
        <fullName evidence="1">Tyrosine--tRNA ligase</fullName>
        <ecNumber evidence="1">6.1.1.1</ecNumber>
    </recommendedName>
    <alternativeName>
        <fullName evidence="1">Tyrosyl-tRNA synthetase</fullName>
        <shortName evidence="1">TyrRS</shortName>
    </alternativeName>
</protein>
<name>SYY_ROSDO</name>
<evidence type="ECO:0000255" key="1">
    <source>
        <dbReference type="HAMAP-Rule" id="MF_02006"/>
    </source>
</evidence>
<comment type="function">
    <text evidence="1">Catalyzes the attachment of tyrosine to tRNA(Tyr) in a two-step reaction: tyrosine is first activated by ATP to form Tyr-AMP and then transferred to the acceptor end of tRNA(Tyr).</text>
</comment>
<comment type="catalytic activity">
    <reaction evidence="1">
        <text>tRNA(Tyr) + L-tyrosine + ATP = L-tyrosyl-tRNA(Tyr) + AMP + diphosphate + H(+)</text>
        <dbReference type="Rhea" id="RHEA:10220"/>
        <dbReference type="Rhea" id="RHEA-COMP:9706"/>
        <dbReference type="Rhea" id="RHEA-COMP:9707"/>
        <dbReference type="ChEBI" id="CHEBI:15378"/>
        <dbReference type="ChEBI" id="CHEBI:30616"/>
        <dbReference type="ChEBI" id="CHEBI:33019"/>
        <dbReference type="ChEBI" id="CHEBI:58315"/>
        <dbReference type="ChEBI" id="CHEBI:78442"/>
        <dbReference type="ChEBI" id="CHEBI:78536"/>
        <dbReference type="ChEBI" id="CHEBI:456215"/>
        <dbReference type="EC" id="6.1.1.1"/>
    </reaction>
</comment>
<comment type="subunit">
    <text evidence="1">Homodimer.</text>
</comment>
<comment type="subcellular location">
    <subcellularLocation>
        <location evidence="1">Cytoplasm</location>
    </subcellularLocation>
</comment>
<comment type="similarity">
    <text evidence="1">Belongs to the class-I aminoacyl-tRNA synthetase family. TyrS type 1 subfamily.</text>
</comment>
<organism>
    <name type="scientific">Roseobacter denitrificans (strain ATCC 33942 / OCh 114)</name>
    <name type="common">Erythrobacter sp. (strain OCh 114)</name>
    <name type="synonym">Roseobacter denitrificans</name>
    <dbReference type="NCBI Taxonomy" id="375451"/>
    <lineage>
        <taxon>Bacteria</taxon>
        <taxon>Pseudomonadati</taxon>
        <taxon>Pseudomonadota</taxon>
        <taxon>Alphaproteobacteria</taxon>
        <taxon>Rhodobacterales</taxon>
        <taxon>Roseobacteraceae</taxon>
        <taxon>Roseobacter</taxon>
    </lineage>
</organism>
<feature type="chain" id="PRO_1000088619" description="Tyrosine--tRNA ligase">
    <location>
        <begin position="1"/>
        <end position="416"/>
    </location>
</feature>
<feature type="domain" description="S4 RNA-binding" evidence="1">
    <location>
        <begin position="351"/>
        <end position="415"/>
    </location>
</feature>
<feature type="short sequence motif" description="'HIGH' region">
    <location>
        <begin position="45"/>
        <end position="54"/>
    </location>
</feature>
<feature type="short sequence motif" description="'KMSKS' region">
    <location>
        <begin position="237"/>
        <end position="241"/>
    </location>
</feature>
<feature type="binding site" evidence="1">
    <location>
        <position position="40"/>
    </location>
    <ligand>
        <name>L-tyrosine</name>
        <dbReference type="ChEBI" id="CHEBI:58315"/>
    </ligand>
</feature>
<feature type="binding site" evidence="1">
    <location>
        <position position="177"/>
    </location>
    <ligand>
        <name>L-tyrosine</name>
        <dbReference type="ChEBI" id="CHEBI:58315"/>
    </ligand>
</feature>
<feature type="binding site" evidence="1">
    <location>
        <position position="181"/>
    </location>
    <ligand>
        <name>L-tyrosine</name>
        <dbReference type="ChEBI" id="CHEBI:58315"/>
    </ligand>
</feature>
<feature type="binding site" evidence="1">
    <location>
        <position position="240"/>
    </location>
    <ligand>
        <name>ATP</name>
        <dbReference type="ChEBI" id="CHEBI:30616"/>
    </ligand>
</feature>
<sequence length="416" mass="45590">MTYIPKSDFMAVMMARGFMADCTDYQGLDEALLKGVQPAYIGFDATAKSLHVGSLIQIMMLRWFQKTGHKPLTLMGGGTTKVGDPSFRADERPLLGPEAIDDNIAGIKQVFSAYIDYSDAPTGALMLNNAEWLDNLNYLDFLRDIGRHFSINRMLSFESVKSRLDREQSLSFLEFNYMILQAYDFMELYRRYGCILQLGGSDQWGNIVNGIDLTRRVIDGEVYGLTSPLLTTSDGKKMGKSQSGAVWLNADMFSPYEFWQFWRNTTDADVGRFLKLYTELPLDECERLGALAGSEINAAKITLANEVTTLLHGAEAAATAAQTARDVFEKGGVGDDLPTLTLSAEDVAQGISIVQLIVKSGLANSGKEAKRLIAENGAKMDDAPLTNAGLMIDAAALQSPIKLSAGKKRHAMVQLG</sequence>
<reference key="1">
    <citation type="journal article" date="2007" name="J. Bacteriol.">
        <title>The complete genome sequence of Roseobacter denitrificans reveals a mixotrophic rather than photosynthetic metabolism.</title>
        <authorList>
            <person name="Swingley W.D."/>
            <person name="Sadekar S."/>
            <person name="Mastrian S.D."/>
            <person name="Matthies H.J."/>
            <person name="Hao J."/>
            <person name="Ramos H."/>
            <person name="Acharya C.R."/>
            <person name="Conrad A.L."/>
            <person name="Taylor H.L."/>
            <person name="Dejesa L.C."/>
            <person name="Shah M.K."/>
            <person name="O'Huallachain M.E."/>
            <person name="Lince M.T."/>
            <person name="Blankenship R.E."/>
            <person name="Beatty J.T."/>
            <person name="Touchman J.W."/>
        </authorList>
    </citation>
    <scope>NUCLEOTIDE SEQUENCE [LARGE SCALE GENOMIC DNA]</scope>
    <source>
        <strain>ATCC 33942 / OCh 114</strain>
    </source>
</reference>
<dbReference type="EC" id="6.1.1.1" evidence="1"/>
<dbReference type="EMBL" id="CP000362">
    <property type="protein sequence ID" value="ABG32654.1"/>
    <property type="molecule type" value="Genomic_DNA"/>
</dbReference>
<dbReference type="RefSeq" id="WP_011569270.1">
    <property type="nucleotide sequence ID" value="NC_008209.1"/>
</dbReference>
<dbReference type="SMR" id="Q164D9"/>
<dbReference type="STRING" id="375451.RD1_3146"/>
<dbReference type="KEGG" id="rde:RD1_3146"/>
<dbReference type="eggNOG" id="COG0162">
    <property type="taxonomic scope" value="Bacteria"/>
</dbReference>
<dbReference type="HOGENOM" id="CLU_024003_0_3_5"/>
<dbReference type="OrthoDB" id="9804243at2"/>
<dbReference type="Proteomes" id="UP000007029">
    <property type="component" value="Chromosome"/>
</dbReference>
<dbReference type="GO" id="GO:0005829">
    <property type="term" value="C:cytosol"/>
    <property type="evidence" value="ECO:0007669"/>
    <property type="project" value="TreeGrafter"/>
</dbReference>
<dbReference type="GO" id="GO:0005524">
    <property type="term" value="F:ATP binding"/>
    <property type="evidence" value="ECO:0007669"/>
    <property type="project" value="UniProtKB-UniRule"/>
</dbReference>
<dbReference type="GO" id="GO:0003723">
    <property type="term" value="F:RNA binding"/>
    <property type="evidence" value="ECO:0007669"/>
    <property type="project" value="UniProtKB-KW"/>
</dbReference>
<dbReference type="GO" id="GO:0004831">
    <property type="term" value="F:tyrosine-tRNA ligase activity"/>
    <property type="evidence" value="ECO:0007669"/>
    <property type="project" value="UniProtKB-UniRule"/>
</dbReference>
<dbReference type="GO" id="GO:0006437">
    <property type="term" value="P:tyrosyl-tRNA aminoacylation"/>
    <property type="evidence" value="ECO:0007669"/>
    <property type="project" value="UniProtKB-UniRule"/>
</dbReference>
<dbReference type="CDD" id="cd00805">
    <property type="entry name" value="TyrRS_core"/>
    <property type="match status" value="1"/>
</dbReference>
<dbReference type="FunFam" id="1.10.240.10:FF:000001">
    <property type="entry name" value="Tyrosine--tRNA ligase"/>
    <property type="match status" value="1"/>
</dbReference>
<dbReference type="Gene3D" id="3.40.50.620">
    <property type="entry name" value="HUPs"/>
    <property type="match status" value="1"/>
</dbReference>
<dbReference type="Gene3D" id="3.10.290.10">
    <property type="entry name" value="RNA-binding S4 domain"/>
    <property type="match status" value="1"/>
</dbReference>
<dbReference type="Gene3D" id="1.10.240.10">
    <property type="entry name" value="Tyrosyl-Transfer RNA Synthetase"/>
    <property type="match status" value="1"/>
</dbReference>
<dbReference type="HAMAP" id="MF_02006">
    <property type="entry name" value="Tyr_tRNA_synth_type1"/>
    <property type="match status" value="1"/>
</dbReference>
<dbReference type="InterPro" id="IPR002305">
    <property type="entry name" value="aa-tRNA-synth_Ic"/>
</dbReference>
<dbReference type="InterPro" id="IPR014729">
    <property type="entry name" value="Rossmann-like_a/b/a_fold"/>
</dbReference>
<dbReference type="InterPro" id="IPR036986">
    <property type="entry name" value="S4_RNA-bd_sf"/>
</dbReference>
<dbReference type="InterPro" id="IPR002307">
    <property type="entry name" value="Tyr-tRNA-ligase"/>
</dbReference>
<dbReference type="InterPro" id="IPR024088">
    <property type="entry name" value="Tyr-tRNA-ligase_bac-type"/>
</dbReference>
<dbReference type="InterPro" id="IPR024107">
    <property type="entry name" value="Tyr-tRNA-ligase_bac_1"/>
</dbReference>
<dbReference type="NCBIfam" id="TIGR00234">
    <property type="entry name" value="tyrS"/>
    <property type="match status" value="1"/>
</dbReference>
<dbReference type="PANTHER" id="PTHR11766:SF0">
    <property type="entry name" value="TYROSINE--TRNA LIGASE, MITOCHONDRIAL"/>
    <property type="match status" value="1"/>
</dbReference>
<dbReference type="PANTHER" id="PTHR11766">
    <property type="entry name" value="TYROSYL-TRNA SYNTHETASE"/>
    <property type="match status" value="1"/>
</dbReference>
<dbReference type="Pfam" id="PF00579">
    <property type="entry name" value="tRNA-synt_1b"/>
    <property type="match status" value="1"/>
</dbReference>
<dbReference type="PRINTS" id="PR01040">
    <property type="entry name" value="TRNASYNTHTYR"/>
</dbReference>
<dbReference type="SUPFAM" id="SSF55174">
    <property type="entry name" value="Alpha-L RNA-binding motif"/>
    <property type="match status" value="1"/>
</dbReference>
<dbReference type="SUPFAM" id="SSF52374">
    <property type="entry name" value="Nucleotidylyl transferase"/>
    <property type="match status" value="1"/>
</dbReference>
<keyword id="KW-0030">Aminoacyl-tRNA synthetase</keyword>
<keyword id="KW-0067">ATP-binding</keyword>
<keyword id="KW-0963">Cytoplasm</keyword>
<keyword id="KW-0436">Ligase</keyword>
<keyword id="KW-0547">Nucleotide-binding</keyword>
<keyword id="KW-0648">Protein biosynthesis</keyword>
<keyword id="KW-1185">Reference proteome</keyword>
<keyword id="KW-0694">RNA-binding</keyword>
<gene>
    <name evidence="1" type="primary">tyrS</name>
    <name type="ordered locus">RD1_3146</name>
</gene>
<accession>Q164D9</accession>
<proteinExistence type="inferred from homology"/>